<sequence length="671" mass="74295">MQFVSTRPQPQQLGIQGLGLDSGSWSWAQALPPEEVCHQEPALRGEMAEGMPPMQAQEWDMDARRPMPFQFPPFPDRAPVFPDRMMREPQLPTAEISLWTVVAAIQAVERKVDAQASQLLNLEGRTGTAEKKLADCEKTAVEFGNHMESKWAVLGTLLQEYGLLQRRLENLENLLRNRNFWVLRLPPGSKGEAPKVPVTFVDIAVYFSEDEWKNLDEWQKELYNNLVKENYKTLMSLDAEGSVPKPDAPVQAEPREEPCVWEQRHPEEREIPMDPEAGAEPLVPAQDASSQVKREDTLCVRGQRGLEERAIPTESITDSPISAQDLLSRIKQEEHQCVWDQQDLADRDIPTDPNSESLISAHDILSWIKQEEQPYPWGPRDSMDGELGLDSGPSDSLLMVKNPPPAPPQPQPQPQPPQPQLQSQPQPQSLPPIAVAENPGGPPSRGLLDDGFQVLPGERGSGEAPPGGDRSTGGGGGDGGGGGGGAEAGTGAGGGCGSCCPGGLRRSLLLHGARSKPYSCPECGKSFGVRKSLIIHHRSHTKERPYECAECEKSFNCHSGLIRHQMTHRGERPYKCSECEKTYSRKEHLQNHQRLHTGERPFQCALCGKSFIRKQNLLKHQRIHTGERPYTCGECGKSFRYKESLKDHLRVHSGGPGPGAPRQLPPPPERD</sequence>
<keyword id="KW-0025">Alternative splicing</keyword>
<keyword id="KW-0238">DNA-binding</keyword>
<keyword id="KW-1017">Isopeptide bond</keyword>
<keyword id="KW-0479">Metal-binding</keyword>
<keyword id="KW-0539">Nucleus</keyword>
<keyword id="KW-0597">Phosphoprotein</keyword>
<keyword id="KW-1267">Proteomics identification</keyword>
<keyword id="KW-1185">Reference proteome</keyword>
<keyword id="KW-0677">Repeat</keyword>
<keyword id="KW-0678">Repressor</keyword>
<keyword id="KW-0804">Transcription</keyword>
<keyword id="KW-0805">Transcription regulation</keyword>
<keyword id="KW-0832">Ubl conjugation</keyword>
<keyword id="KW-0862">Zinc</keyword>
<keyword id="KW-0863">Zinc-finger</keyword>
<protein>
    <recommendedName>
        <fullName>Zinc finger protein 282</fullName>
    </recommendedName>
    <alternativeName>
        <fullName>HTLV-I U5RE-binding protein 1</fullName>
        <shortName>HUB-1</shortName>
    </alternativeName>
</protein>
<feature type="chain" id="PRO_0000047506" description="Zinc finger protein 282">
    <location>
        <begin position="1"/>
        <end position="671"/>
    </location>
</feature>
<feature type="domain" description="KRAB" evidence="2">
    <location>
        <begin position="198"/>
        <end position="271"/>
    </location>
</feature>
<feature type="zinc finger region" description="C2H2-type 1" evidence="1">
    <location>
        <begin position="518"/>
        <end position="540"/>
    </location>
</feature>
<feature type="zinc finger region" description="C2H2-type 2" evidence="1">
    <location>
        <begin position="546"/>
        <end position="568"/>
    </location>
</feature>
<feature type="zinc finger region" description="C2H2-type 3" evidence="1">
    <location>
        <begin position="574"/>
        <end position="596"/>
    </location>
</feature>
<feature type="zinc finger region" description="C2H2-type 4" evidence="1">
    <location>
        <begin position="602"/>
        <end position="624"/>
    </location>
</feature>
<feature type="zinc finger region" description="C2H2-type 5" evidence="1">
    <location>
        <begin position="630"/>
        <end position="652"/>
    </location>
</feature>
<feature type="region of interest" description="Disordered" evidence="3">
    <location>
        <begin position="239"/>
        <end position="258"/>
    </location>
</feature>
<feature type="region of interest" description="Disordered" evidence="3">
    <location>
        <begin position="373"/>
        <end position="486"/>
    </location>
</feature>
<feature type="region of interest" description="Disordered" evidence="3">
    <location>
        <begin position="649"/>
        <end position="671"/>
    </location>
</feature>
<feature type="compositionally biased region" description="Low complexity" evidence="3">
    <location>
        <begin position="385"/>
        <end position="398"/>
    </location>
</feature>
<feature type="compositionally biased region" description="Pro residues" evidence="3">
    <location>
        <begin position="402"/>
        <end position="419"/>
    </location>
</feature>
<feature type="compositionally biased region" description="Gly residues" evidence="3">
    <location>
        <begin position="470"/>
        <end position="486"/>
    </location>
</feature>
<feature type="modified residue" description="Phosphoserine" evidence="6">
    <location>
        <position position="319"/>
    </location>
</feature>
<feature type="cross-link" description="Glycyl lysine isopeptide (Lys-Gly) (interchain with G-Cter in SUMO2)" evidence="7">
    <location>
        <position position="293"/>
    </location>
</feature>
<feature type="splice variant" id="VSP_056545" description="In isoform 2." evidence="4">
    <original>VLPGERGSGE</original>
    <variation>PHQGAALRVR</variation>
    <location>
        <begin position="454"/>
        <end position="463"/>
    </location>
</feature>
<feature type="splice variant" id="VSP_056546" description="In isoform 2." evidence="4">
    <location>
        <begin position="464"/>
        <end position="671"/>
    </location>
</feature>
<feature type="sequence variant" id="VAR_052805" description="In dbSNP:rs1202418.">
    <original>M</original>
    <variation>V</variation>
    <location>
        <position position="273"/>
    </location>
</feature>
<feature type="sequence conflict" description="In Ref. 1; BAA24380." evidence="5" ref="1">
    <original>E</original>
    <variation>Q</variation>
    <location>
        <position position="35"/>
    </location>
</feature>
<feature type="sequence conflict" description="In Ref. 1; BAA24380." evidence="5" ref="1">
    <original>P</original>
    <variation>R</variation>
    <location>
        <position position="414"/>
    </location>
</feature>
<comment type="function">
    <text>Binds to the U5 repressive element (U5RE) of the human T cell leukemia virus type I long terminal repeat. It recognizes the 5'-TCCACCCC-3' sequence as a core motif and exerts a strong repressive effect on HTLV-I LTR-mediated expression.</text>
</comment>
<comment type="interaction">
    <interactant intactId="EBI-2371670">
        <id>Q9UDV7</id>
    </interactant>
    <interactant intactId="EBI-8643207">
        <id>Q8TD17</id>
        <label>ZNF398</label>
    </interactant>
    <organismsDiffer>false</organismsDiffer>
    <experiments>5</experiments>
</comment>
<comment type="subcellular location">
    <subcellularLocation>
        <location evidence="5">Nucleus</location>
    </subcellularLocation>
</comment>
<comment type="alternative products">
    <event type="alternative splicing"/>
    <isoform>
        <id>Q9UDV7-1</id>
        <name>1</name>
        <sequence type="displayed"/>
    </isoform>
    <isoform>
        <id>Q9UDV7-2</id>
        <name>2</name>
        <sequence type="described" ref="VSP_056545 VSP_056546"/>
    </isoform>
</comment>
<comment type="tissue specificity">
    <text>Ubiquitous.</text>
</comment>
<comment type="similarity">
    <text evidence="5">Belongs to the krueppel C2H2-type zinc-finger protein family.</text>
</comment>
<comment type="sequence caution" evidence="5">
    <conflict type="erroneous initiation">
        <sequence resource="EMBL-CDS" id="BAA24380"/>
    </conflict>
</comment>
<organism>
    <name type="scientific">Homo sapiens</name>
    <name type="common">Human</name>
    <dbReference type="NCBI Taxonomy" id="9606"/>
    <lineage>
        <taxon>Eukaryota</taxon>
        <taxon>Metazoa</taxon>
        <taxon>Chordata</taxon>
        <taxon>Craniata</taxon>
        <taxon>Vertebrata</taxon>
        <taxon>Euteleostomi</taxon>
        <taxon>Mammalia</taxon>
        <taxon>Eutheria</taxon>
        <taxon>Euarchontoglires</taxon>
        <taxon>Primates</taxon>
        <taxon>Haplorrhini</taxon>
        <taxon>Catarrhini</taxon>
        <taxon>Hominidae</taxon>
        <taxon>Homo</taxon>
    </lineage>
</organism>
<name>ZN282_HUMAN</name>
<accession>Q9UDV7</accession>
<accession>B4DRI5</accession>
<accession>O43691</accession>
<accession>Q6DKK0</accession>
<gene>
    <name type="primary">ZNF282</name>
    <name type="synonym">HUB1</name>
</gene>
<dbReference type="EMBL" id="D30612">
    <property type="protein sequence ID" value="BAA24380.1"/>
    <property type="status" value="ALT_INIT"/>
    <property type="molecule type" value="mRNA"/>
</dbReference>
<dbReference type="EMBL" id="AK299280">
    <property type="protein sequence ID" value="BAG61297.1"/>
    <property type="molecule type" value="mRNA"/>
</dbReference>
<dbReference type="EMBL" id="AK316282">
    <property type="protein sequence ID" value="BAH14653.1"/>
    <property type="molecule type" value="mRNA"/>
</dbReference>
<dbReference type="EMBL" id="AC004890">
    <property type="status" value="NOT_ANNOTATED_CDS"/>
    <property type="molecule type" value="Genomic_DNA"/>
</dbReference>
<dbReference type="EMBL" id="BC073805">
    <property type="protein sequence ID" value="AAH73805.1"/>
    <property type="molecule type" value="mRNA"/>
</dbReference>
<dbReference type="CCDS" id="CCDS5895.1">
    <molecule id="Q9UDV7-1"/>
</dbReference>
<dbReference type="CCDS" id="CCDS78284.1">
    <molecule id="Q9UDV7-2"/>
</dbReference>
<dbReference type="RefSeq" id="NP_001290410.1">
    <molecule id="Q9UDV7-2"/>
    <property type="nucleotide sequence ID" value="NM_001303481.3"/>
</dbReference>
<dbReference type="RefSeq" id="NP_003566.1">
    <molecule id="Q9UDV7-1"/>
    <property type="nucleotide sequence ID" value="NM_003575.4"/>
</dbReference>
<dbReference type="SMR" id="Q9UDV7"/>
<dbReference type="BioGRID" id="114010">
    <property type="interactions" value="25"/>
</dbReference>
<dbReference type="FunCoup" id="Q9UDV7">
    <property type="interactions" value="366"/>
</dbReference>
<dbReference type="IntAct" id="Q9UDV7">
    <property type="interactions" value="23"/>
</dbReference>
<dbReference type="MINT" id="Q9UDV7"/>
<dbReference type="STRING" id="9606.ENSP00000477841"/>
<dbReference type="iPTMnet" id="Q9UDV7"/>
<dbReference type="PhosphoSitePlus" id="Q9UDV7"/>
<dbReference type="BioMuta" id="ZNF282"/>
<dbReference type="DMDM" id="116242858"/>
<dbReference type="jPOST" id="Q9UDV7"/>
<dbReference type="MassIVE" id="Q9UDV7"/>
<dbReference type="PaxDb" id="9606-ENSP00000477841"/>
<dbReference type="PeptideAtlas" id="Q9UDV7"/>
<dbReference type="ProteomicsDB" id="4954"/>
<dbReference type="ProteomicsDB" id="84119">
    <molecule id="Q9UDV7-1"/>
</dbReference>
<dbReference type="Antibodypedia" id="18575">
    <property type="antibodies" value="79 antibodies from 17 providers"/>
</dbReference>
<dbReference type="DNASU" id="8427"/>
<dbReference type="Ensembl" id="ENST00000479907.1">
    <molecule id="Q9UDV7-2"/>
    <property type="protein sequence ID" value="ENSP00000418840.1"/>
    <property type="gene ID" value="ENSG00000170265.13"/>
</dbReference>
<dbReference type="Ensembl" id="ENST00000610704.5">
    <molecule id="Q9UDV7-1"/>
    <property type="protein sequence ID" value="ENSP00000477841.1"/>
    <property type="gene ID" value="ENSG00000170265.13"/>
</dbReference>
<dbReference type="Ensembl" id="ENST00000850624.1">
    <molecule id="Q9UDV7-1"/>
    <property type="protein sequence ID" value="ENSP00000520909.1"/>
    <property type="gene ID" value="ENSG00000170265.13"/>
</dbReference>
<dbReference type="GeneID" id="8427"/>
<dbReference type="KEGG" id="hsa:8427"/>
<dbReference type="MANE-Select" id="ENST00000610704.5">
    <property type="protein sequence ID" value="ENSP00000477841.1"/>
    <property type="RefSeq nucleotide sequence ID" value="NM_003575.4"/>
    <property type="RefSeq protein sequence ID" value="NP_003566.1"/>
</dbReference>
<dbReference type="UCSC" id="uc011kun.2">
    <molecule id="Q9UDV7-1"/>
    <property type="organism name" value="human"/>
</dbReference>
<dbReference type="AGR" id="HGNC:13076"/>
<dbReference type="CTD" id="8427"/>
<dbReference type="DisGeNET" id="8427"/>
<dbReference type="GeneCards" id="ZNF282"/>
<dbReference type="HGNC" id="HGNC:13076">
    <property type="gene designation" value="ZNF282"/>
</dbReference>
<dbReference type="HPA" id="ENSG00000170265">
    <property type="expression patterns" value="Low tissue specificity"/>
</dbReference>
<dbReference type="MIM" id="603397">
    <property type="type" value="gene"/>
</dbReference>
<dbReference type="neXtProt" id="NX_Q9UDV7"/>
<dbReference type="OpenTargets" id="ENSG00000170265"/>
<dbReference type="PharmGKB" id="PA37652"/>
<dbReference type="VEuPathDB" id="HostDB:ENSG00000170265"/>
<dbReference type="eggNOG" id="KOG1721">
    <property type="taxonomic scope" value="Eukaryota"/>
</dbReference>
<dbReference type="GeneTree" id="ENSGT00940000161885"/>
<dbReference type="HOGENOM" id="CLU_002678_76_0_1"/>
<dbReference type="InParanoid" id="Q9UDV7"/>
<dbReference type="OMA" id="EEQQCVW"/>
<dbReference type="OrthoDB" id="427030at2759"/>
<dbReference type="PAN-GO" id="Q9UDV7">
    <property type="GO annotations" value="3 GO annotations based on evolutionary models"/>
</dbReference>
<dbReference type="PhylomeDB" id="Q9UDV7"/>
<dbReference type="TreeFam" id="TF337777"/>
<dbReference type="PathwayCommons" id="Q9UDV7"/>
<dbReference type="Reactome" id="R-HSA-212436">
    <property type="pathway name" value="Generic Transcription Pathway"/>
</dbReference>
<dbReference type="SignaLink" id="Q9UDV7"/>
<dbReference type="BioGRID-ORCS" id="8427">
    <property type="hits" value="18 hits in 1182 CRISPR screens"/>
</dbReference>
<dbReference type="ChiTaRS" id="ZNF282">
    <property type="organism name" value="human"/>
</dbReference>
<dbReference type="GenomeRNAi" id="8427"/>
<dbReference type="Pharos" id="Q9UDV7">
    <property type="development level" value="Tdark"/>
</dbReference>
<dbReference type="PRO" id="PR:Q9UDV7"/>
<dbReference type="Proteomes" id="UP000005640">
    <property type="component" value="Chromosome 7"/>
</dbReference>
<dbReference type="RNAct" id="Q9UDV7">
    <property type="molecule type" value="protein"/>
</dbReference>
<dbReference type="Bgee" id="ENSG00000170265">
    <property type="expression patterns" value="Expressed in sural nerve and 123 other cell types or tissues"/>
</dbReference>
<dbReference type="ExpressionAtlas" id="Q9UDV7">
    <property type="expression patterns" value="baseline and differential"/>
</dbReference>
<dbReference type="GO" id="GO:0005634">
    <property type="term" value="C:nucleus"/>
    <property type="evidence" value="ECO:0007669"/>
    <property type="project" value="UniProtKB-SubCell"/>
</dbReference>
<dbReference type="GO" id="GO:0003700">
    <property type="term" value="F:DNA-binding transcription factor activity"/>
    <property type="evidence" value="ECO:0000303"/>
    <property type="project" value="ARUK-UCL"/>
</dbReference>
<dbReference type="GO" id="GO:1990837">
    <property type="term" value="F:sequence-specific double-stranded DNA binding"/>
    <property type="evidence" value="ECO:0000314"/>
    <property type="project" value="ARUK-UCL"/>
</dbReference>
<dbReference type="GO" id="GO:0008270">
    <property type="term" value="F:zinc ion binding"/>
    <property type="evidence" value="ECO:0000303"/>
    <property type="project" value="UniProtKB"/>
</dbReference>
<dbReference type="GO" id="GO:0045892">
    <property type="term" value="P:negative regulation of DNA-templated transcription"/>
    <property type="evidence" value="ECO:0000304"/>
    <property type="project" value="UniProtKB"/>
</dbReference>
<dbReference type="GO" id="GO:0006355">
    <property type="term" value="P:regulation of DNA-templated transcription"/>
    <property type="evidence" value="ECO:0000304"/>
    <property type="project" value="UniProtKB"/>
</dbReference>
<dbReference type="CDD" id="cd07765">
    <property type="entry name" value="KRAB_A-box"/>
    <property type="match status" value="1"/>
</dbReference>
<dbReference type="FunFam" id="3.30.160.60:FF:000151">
    <property type="entry name" value="Zinc finger and SCAN domain-containing 21"/>
    <property type="match status" value="1"/>
</dbReference>
<dbReference type="FunFam" id="3.30.160.60:FF:002716">
    <property type="entry name" value="Zinc finger protein 212"/>
    <property type="match status" value="1"/>
</dbReference>
<dbReference type="FunFam" id="3.30.160.60:FF:001271">
    <property type="entry name" value="Zinc finger protein 282"/>
    <property type="match status" value="1"/>
</dbReference>
<dbReference type="FunFam" id="3.30.160.60:FF:001415">
    <property type="entry name" value="zinc finger protein 282"/>
    <property type="match status" value="1"/>
</dbReference>
<dbReference type="FunFam" id="3.30.160.60:FF:001526">
    <property type="entry name" value="zinc finger protein 282"/>
    <property type="match status" value="1"/>
</dbReference>
<dbReference type="Gene3D" id="6.10.140.140">
    <property type="match status" value="1"/>
</dbReference>
<dbReference type="Gene3D" id="3.30.160.60">
    <property type="entry name" value="Classic Zinc Finger"/>
    <property type="match status" value="5"/>
</dbReference>
<dbReference type="InterPro" id="IPR001909">
    <property type="entry name" value="KRAB"/>
</dbReference>
<dbReference type="InterPro" id="IPR036051">
    <property type="entry name" value="KRAB_dom_sf"/>
</dbReference>
<dbReference type="InterPro" id="IPR036236">
    <property type="entry name" value="Znf_C2H2_sf"/>
</dbReference>
<dbReference type="InterPro" id="IPR013087">
    <property type="entry name" value="Znf_C2H2_type"/>
</dbReference>
<dbReference type="PANTHER" id="PTHR24381">
    <property type="entry name" value="ZINC FINGER PROTEIN"/>
    <property type="match status" value="1"/>
</dbReference>
<dbReference type="PANTHER" id="PTHR24381:SF269">
    <property type="entry name" value="ZINC FINGER PROTEIN 398"/>
    <property type="match status" value="1"/>
</dbReference>
<dbReference type="Pfam" id="PF01352">
    <property type="entry name" value="KRAB"/>
    <property type="match status" value="1"/>
</dbReference>
<dbReference type="Pfam" id="PF00096">
    <property type="entry name" value="zf-C2H2"/>
    <property type="match status" value="4"/>
</dbReference>
<dbReference type="SMART" id="SM00349">
    <property type="entry name" value="KRAB"/>
    <property type="match status" value="1"/>
</dbReference>
<dbReference type="SMART" id="SM00355">
    <property type="entry name" value="ZnF_C2H2"/>
    <property type="match status" value="5"/>
</dbReference>
<dbReference type="SUPFAM" id="SSF57667">
    <property type="entry name" value="beta-beta-alpha zinc fingers"/>
    <property type="match status" value="3"/>
</dbReference>
<dbReference type="SUPFAM" id="SSF109640">
    <property type="entry name" value="KRAB domain (Kruppel-associated box)"/>
    <property type="match status" value="1"/>
</dbReference>
<dbReference type="PROSITE" id="PS50805">
    <property type="entry name" value="KRAB"/>
    <property type="match status" value="1"/>
</dbReference>
<dbReference type="PROSITE" id="PS00028">
    <property type="entry name" value="ZINC_FINGER_C2H2_1"/>
    <property type="match status" value="5"/>
</dbReference>
<dbReference type="PROSITE" id="PS50157">
    <property type="entry name" value="ZINC_FINGER_C2H2_2"/>
    <property type="match status" value="5"/>
</dbReference>
<reference key="1">
    <citation type="journal article" date="1997" name="Nucleic Acids Res.">
        <title>HUB1, a novel Kruppel type zinc finger protein, represses the human T cell leukemia virus type I long terminal repeat-mediated expression.</title>
        <authorList>
            <person name="Okumura K."/>
            <person name="Sakaguchi G."/>
            <person name="Naito K."/>
            <person name="Tamura T."/>
            <person name="Igarashi H."/>
        </authorList>
    </citation>
    <scope>NUCLEOTIDE SEQUENCE [MRNA] (ISOFORM 1)</scope>
</reference>
<reference key="2">
    <citation type="journal article" date="2004" name="Nat. Genet.">
        <title>Complete sequencing and characterization of 21,243 full-length human cDNAs.</title>
        <authorList>
            <person name="Ota T."/>
            <person name="Suzuki Y."/>
            <person name="Nishikawa T."/>
            <person name="Otsuki T."/>
            <person name="Sugiyama T."/>
            <person name="Irie R."/>
            <person name="Wakamatsu A."/>
            <person name="Hayashi K."/>
            <person name="Sato H."/>
            <person name="Nagai K."/>
            <person name="Kimura K."/>
            <person name="Makita H."/>
            <person name="Sekine M."/>
            <person name="Obayashi M."/>
            <person name="Nishi T."/>
            <person name="Shibahara T."/>
            <person name="Tanaka T."/>
            <person name="Ishii S."/>
            <person name="Yamamoto J."/>
            <person name="Saito K."/>
            <person name="Kawai Y."/>
            <person name="Isono Y."/>
            <person name="Nakamura Y."/>
            <person name="Nagahari K."/>
            <person name="Murakami K."/>
            <person name="Yasuda T."/>
            <person name="Iwayanagi T."/>
            <person name="Wagatsuma M."/>
            <person name="Shiratori A."/>
            <person name="Sudo H."/>
            <person name="Hosoiri T."/>
            <person name="Kaku Y."/>
            <person name="Kodaira H."/>
            <person name="Kondo H."/>
            <person name="Sugawara M."/>
            <person name="Takahashi M."/>
            <person name="Kanda K."/>
            <person name="Yokoi T."/>
            <person name="Furuya T."/>
            <person name="Kikkawa E."/>
            <person name="Omura Y."/>
            <person name="Abe K."/>
            <person name="Kamihara K."/>
            <person name="Katsuta N."/>
            <person name="Sato K."/>
            <person name="Tanikawa M."/>
            <person name="Yamazaki M."/>
            <person name="Ninomiya K."/>
            <person name="Ishibashi T."/>
            <person name="Yamashita H."/>
            <person name="Murakawa K."/>
            <person name="Fujimori K."/>
            <person name="Tanai H."/>
            <person name="Kimata M."/>
            <person name="Watanabe M."/>
            <person name="Hiraoka S."/>
            <person name="Chiba Y."/>
            <person name="Ishida S."/>
            <person name="Ono Y."/>
            <person name="Takiguchi S."/>
            <person name="Watanabe S."/>
            <person name="Yosida M."/>
            <person name="Hotuta T."/>
            <person name="Kusano J."/>
            <person name="Kanehori K."/>
            <person name="Takahashi-Fujii A."/>
            <person name="Hara H."/>
            <person name="Tanase T.-O."/>
            <person name="Nomura Y."/>
            <person name="Togiya S."/>
            <person name="Komai F."/>
            <person name="Hara R."/>
            <person name="Takeuchi K."/>
            <person name="Arita M."/>
            <person name="Imose N."/>
            <person name="Musashino K."/>
            <person name="Yuuki H."/>
            <person name="Oshima A."/>
            <person name="Sasaki N."/>
            <person name="Aotsuka S."/>
            <person name="Yoshikawa Y."/>
            <person name="Matsunawa H."/>
            <person name="Ichihara T."/>
            <person name="Shiohata N."/>
            <person name="Sano S."/>
            <person name="Moriya S."/>
            <person name="Momiyama H."/>
            <person name="Satoh N."/>
            <person name="Takami S."/>
            <person name="Terashima Y."/>
            <person name="Suzuki O."/>
            <person name="Nakagawa S."/>
            <person name="Senoh A."/>
            <person name="Mizoguchi H."/>
            <person name="Goto Y."/>
            <person name="Shimizu F."/>
            <person name="Wakebe H."/>
            <person name="Hishigaki H."/>
            <person name="Watanabe T."/>
            <person name="Sugiyama A."/>
            <person name="Takemoto M."/>
            <person name="Kawakami B."/>
            <person name="Yamazaki M."/>
            <person name="Watanabe K."/>
            <person name="Kumagai A."/>
            <person name="Itakura S."/>
            <person name="Fukuzumi Y."/>
            <person name="Fujimori Y."/>
            <person name="Komiyama M."/>
            <person name="Tashiro H."/>
            <person name="Tanigami A."/>
            <person name="Fujiwara T."/>
            <person name="Ono T."/>
            <person name="Yamada K."/>
            <person name="Fujii Y."/>
            <person name="Ozaki K."/>
            <person name="Hirao M."/>
            <person name="Ohmori Y."/>
            <person name="Kawabata A."/>
            <person name="Hikiji T."/>
            <person name="Kobatake N."/>
            <person name="Inagaki H."/>
            <person name="Ikema Y."/>
            <person name="Okamoto S."/>
            <person name="Okitani R."/>
            <person name="Kawakami T."/>
            <person name="Noguchi S."/>
            <person name="Itoh T."/>
            <person name="Shigeta K."/>
            <person name="Senba T."/>
            <person name="Matsumura K."/>
            <person name="Nakajima Y."/>
            <person name="Mizuno T."/>
            <person name="Morinaga M."/>
            <person name="Sasaki M."/>
            <person name="Togashi T."/>
            <person name="Oyama M."/>
            <person name="Hata H."/>
            <person name="Watanabe M."/>
            <person name="Komatsu T."/>
            <person name="Mizushima-Sugano J."/>
            <person name="Satoh T."/>
            <person name="Shirai Y."/>
            <person name="Takahashi Y."/>
            <person name="Nakagawa K."/>
            <person name="Okumura K."/>
            <person name="Nagase T."/>
            <person name="Nomura N."/>
            <person name="Kikuchi H."/>
            <person name="Masuho Y."/>
            <person name="Yamashita R."/>
            <person name="Nakai K."/>
            <person name="Yada T."/>
            <person name="Nakamura Y."/>
            <person name="Ohara O."/>
            <person name="Isogai T."/>
            <person name="Sugano S."/>
        </authorList>
    </citation>
    <scope>NUCLEOTIDE SEQUENCE [LARGE SCALE MRNA] (ISOFORM 2)</scope>
    <source>
        <tissue>Brain</tissue>
    </source>
</reference>
<reference key="3">
    <citation type="journal article" date="2003" name="Nature">
        <title>The DNA sequence of human chromosome 7.</title>
        <authorList>
            <person name="Hillier L.W."/>
            <person name="Fulton R.S."/>
            <person name="Fulton L.A."/>
            <person name="Graves T.A."/>
            <person name="Pepin K.H."/>
            <person name="Wagner-McPherson C."/>
            <person name="Layman D."/>
            <person name="Maas J."/>
            <person name="Jaeger S."/>
            <person name="Walker R."/>
            <person name="Wylie K."/>
            <person name="Sekhon M."/>
            <person name="Becker M.C."/>
            <person name="O'Laughlin M.D."/>
            <person name="Schaller M.E."/>
            <person name="Fewell G.A."/>
            <person name="Delehaunty K.D."/>
            <person name="Miner T.L."/>
            <person name="Nash W.E."/>
            <person name="Cordes M."/>
            <person name="Du H."/>
            <person name="Sun H."/>
            <person name="Edwards J."/>
            <person name="Bradshaw-Cordum H."/>
            <person name="Ali J."/>
            <person name="Andrews S."/>
            <person name="Isak A."/>
            <person name="Vanbrunt A."/>
            <person name="Nguyen C."/>
            <person name="Du F."/>
            <person name="Lamar B."/>
            <person name="Courtney L."/>
            <person name="Kalicki J."/>
            <person name="Ozersky P."/>
            <person name="Bielicki L."/>
            <person name="Scott K."/>
            <person name="Holmes A."/>
            <person name="Harkins R."/>
            <person name="Harris A."/>
            <person name="Strong C.M."/>
            <person name="Hou S."/>
            <person name="Tomlinson C."/>
            <person name="Dauphin-Kohlberg S."/>
            <person name="Kozlowicz-Reilly A."/>
            <person name="Leonard S."/>
            <person name="Rohlfing T."/>
            <person name="Rock S.M."/>
            <person name="Tin-Wollam A.-M."/>
            <person name="Abbott A."/>
            <person name="Minx P."/>
            <person name="Maupin R."/>
            <person name="Strowmatt C."/>
            <person name="Latreille P."/>
            <person name="Miller N."/>
            <person name="Johnson D."/>
            <person name="Murray J."/>
            <person name="Woessner J.P."/>
            <person name="Wendl M.C."/>
            <person name="Yang S.-P."/>
            <person name="Schultz B.R."/>
            <person name="Wallis J.W."/>
            <person name="Spieth J."/>
            <person name="Bieri T.A."/>
            <person name="Nelson J.O."/>
            <person name="Berkowicz N."/>
            <person name="Wohldmann P.E."/>
            <person name="Cook L.L."/>
            <person name="Hickenbotham M.T."/>
            <person name="Eldred J."/>
            <person name="Williams D."/>
            <person name="Bedell J.A."/>
            <person name="Mardis E.R."/>
            <person name="Clifton S.W."/>
            <person name="Chissoe S.L."/>
            <person name="Marra M.A."/>
            <person name="Raymond C."/>
            <person name="Haugen E."/>
            <person name="Gillett W."/>
            <person name="Zhou Y."/>
            <person name="James R."/>
            <person name="Phelps K."/>
            <person name="Iadanoto S."/>
            <person name="Bubb K."/>
            <person name="Simms E."/>
            <person name="Levy R."/>
            <person name="Clendenning J."/>
            <person name="Kaul R."/>
            <person name="Kent W.J."/>
            <person name="Furey T.S."/>
            <person name="Baertsch R.A."/>
            <person name="Brent M.R."/>
            <person name="Keibler E."/>
            <person name="Flicek P."/>
            <person name="Bork P."/>
            <person name="Suyama M."/>
            <person name="Bailey J.A."/>
            <person name="Portnoy M.E."/>
            <person name="Torrents D."/>
            <person name="Chinwalla A.T."/>
            <person name="Gish W.R."/>
            <person name="Eddy S.R."/>
            <person name="McPherson J.D."/>
            <person name="Olson M.V."/>
            <person name="Eichler E.E."/>
            <person name="Green E.D."/>
            <person name="Waterston R.H."/>
            <person name="Wilson R.K."/>
        </authorList>
    </citation>
    <scope>NUCLEOTIDE SEQUENCE [LARGE SCALE GENOMIC DNA]</scope>
</reference>
<reference key="4">
    <citation type="journal article" date="2004" name="Genome Res.">
        <title>The status, quality, and expansion of the NIH full-length cDNA project: the Mammalian Gene Collection (MGC).</title>
        <authorList>
            <consortium name="The MGC Project Team"/>
        </authorList>
    </citation>
    <scope>NUCLEOTIDE SEQUENCE [LARGE SCALE MRNA] (ISOFORM 1)</scope>
    <source>
        <tissue>Ovary</tissue>
    </source>
</reference>
<reference key="5">
    <citation type="journal article" date="2013" name="J. Proteome Res.">
        <title>Toward a comprehensive characterization of a human cancer cell phosphoproteome.</title>
        <authorList>
            <person name="Zhou H."/>
            <person name="Di Palma S."/>
            <person name="Preisinger C."/>
            <person name="Peng M."/>
            <person name="Polat A.N."/>
            <person name="Heck A.J."/>
            <person name="Mohammed S."/>
        </authorList>
    </citation>
    <scope>PHOSPHORYLATION [LARGE SCALE ANALYSIS] AT SER-319</scope>
    <scope>IDENTIFICATION BY MASS SPECTROMETRY [LARGE SCALE ANALYSIS]</scope>
    <source>
        <tissue>Erythroleukemia</tissue>
    </source>
</reference>
<reference key="6">
    <citation type="journal article" date="2017" name="Nat. Struct. Mol. Biol.">
        <title>Site-specific mapping of the human SUMO proteome reveals co-modification with phosphorylation.</title>
        <authorList>
            <person name="Hendriks I.A."/>
            <person name="Lyon D."/>
            <person name="Young C."/>
            <person name="Jensen L.J."/>
            <person name="Vertegaal A.C."/>
            <person name="Nielsen M.L."/>
        </authorList>
    </citation>
    <scope>SUMOYLATION [LARGE SCALE ANALYSIS] AT LYS-293</scope>
    <scope>IDENTIFICATION BY MASS SPECTROMETRY [LARGE SCALE ANALYSIS]</scope>
</reference>
<evidence type="ECO:0000255" key="1">
    <source>
        <dbReference type="PROSITE-ProRule" id="PRU00042"/>
    </source>
</evidence>
<evidence type="ECO:0000255" key="2">
    <source>
        <dbReference type="PROSITE-ProRule" id="PRU00119"/>
    </source>
</evidence>
<evidence type="ECO:0000256" key="3">
    <source>
        <dbReference type="SAM" id="MobiDB-lite"/>
    </source>
</evidence>
<evidence type="ECO:0000303" key="4">
    <source>
    </source>
</evidence>
<evidence type="ECO:0000305" key="5"/>
<evidence type="ECO:0007744" key="6">
    <source>
    </source>
</evidence>
<evidence type="ECO:0007744" key="7">
    <source>
    </source>
</evidence>
<proteinExistence type="evidence at protein level"/>